<evidence type="ECO:0000250" key="1"/>
<evidence type="ECO:0000255" key="2"/>
<evidence type="ECO:0000255" key="3">
    <source>
        <dbReference type="PROSITE-ProRule" id="PRU00198"/>
    </source>
</evidence>
<evidence type="ECO:0000269" key="4">
    <source>
    </source>
</evidence>
<evidence type="ECO:0000269" key="5">
    <source>
    </source>
</evidence>
<evidence type="ECO:0000303" key="6">
    <source>
    </source>
</evidence>
<evidence type="ECO:0000305" key="7"/>
<feature type="chain" id="PRO_0000344230" description="Putative solute carrier family 26 member 10P">
    <location>
        <begin position="1"/>
        <end position="563"/>
    </location>
</feature>
<feature type="transmembrane region" description="Helical" evidence="2">
    <location>
        <begin position="45"/>
        <end position="65"/>
    </location>
</feature>
<feature type="transmembrane region" description="Helical" evidence="2">
    <location>
        <begin position="75"/>
        <end position="91"/>
    </location>
</feature>
<feature type="transmembrane region" description="Helical" evidence="2">
    <location>
        <begin position="116"/>
        <end position="136"/>
    </location>
</feature>
<feature type="transmembrane region" description="Helical" evidence="2">
    <location>
        <begin position="152"/>
        <end position="172"/>
    </location>
</feature>
<feature type="transmembrane region" description="Helical" evidence="2">
    <location>
        <begin position="352"/>
        <end position="372"/>
    </location>
</feature>
<feature type="domain" description="STAS" evidence="3">
    <location>
        <begin position="406"/>
        <end position="541"/>
    </location>
</feature>
<feature type="splice variant" id="VSP_034748" description="In isoform 2." evidence="6">
    <original>LLQVPGLCILSYPTPLYFGTRGQFRCNLEWHLGLGEGEKETSKPD</original>
    <variation>AVWMVTWVAVVTLSVDLGLAVGVVFSMMTVVCRTRSSSRSRGSAS</variation>
    <location>
        <begin position="410"/>
        <end position="454"/>
    </location>
</feature>
<feature type="splice variant" id="VSP_034749" description="In isoform 2." evidence="6">
    <location>
        <begin position="455"/>
        <end position="563"/>
    </location>
</feature>
<feature type="sequence variant" id="VAR_045599" description="In dbSNP:rs971209.">
    <original>M</original>
    <variation>T</variation>
    <location>
        <position position="130"/>
    </location>
</feature>
<feature type="sequence variant" id="VAR_045600" description="In dbSNP:rs923828." evidence="4">
    <original>A</original>
    <variation>T</variation>
    <location>
        <position position="193"/>
    </location>
</feature>
<feature type="sequence variant" id="VAR_045678" description="In a colorectal cancer sample; somatic mutation." evidence="5">
    <original>L</original>
    <variation>S</variation>
    <location>
        <position position="270"/>
    </location>
</feature>
<feature type="sequence variant" id="VAR_045601" description="In dbSNP:rs774895.">
    <original>L</original>
    <variation>V</variation>
    <location>
        <position position="546"/>
    </location>
</feature>
<proteinExistence type="uncertain"/>
<reference key="1">
    <citation type="journal article" date="2000" name="Genomics">
        <title>Mapping of five new putative anion transporter genes in human and characterization of SLC26A6, a candidate gene for pancreatic anion exchanger.</title>
        <authorList>
            <person name="Lohi H."/>
            <person name="Kujala M."/>
            <person name="Kerkelae E."/>
            <person name="Saarialho-Kere U."/>
            <person name="Kestilae M."/>
            <person name="Kere J."/>
        </authorList>
    </citation>
    <scope>NUCLEOTIDE SEQUENCE [MRNA] (ISOFORM 1)</scope>
</reference>
<reference key="2">
    <citation type="journal article" date="2006" name="Nature">
        <title>The finished DNA sequence of human chromosome 12.</title>
        <authorList>
            <person name="Scherer S.E."/>
            <person name="Muzny D.M."/>
            <person name="Buhay C.J."/>
            <person name="Chen R."/>
            <person name="Cree A."/>
            <person name="Ding Y."/>
            <person name="Dugan-Rocha S."/>
            <person name="Gill R."/>
            <person name="Gunaratne P."/>
            <person name="Harris R.A."/>
            <person name="Hawes A.C."/>
            <person name="Hernandez J."/>
            <person name="Hodgson A.V."/>
            <person name="Hume J."/>
            <person name="Jackson A."/>
            <person name="Khan Z.M."/>
            <person name="Kovar-Smith C."/>
            <person name="Lewis L.R."/>
            <person name="Lozado R.J."/>
            <person name="Metzker M.L."/>
            <person name="Milosavljevic A."/>
            <person name="Miner G.R."/>
            <person name="Montgomery K.T."/>
            <person name="Morgan M.B."/>
            <person name="Nazareth L.V."/>
            <person name="Scott G."/>
            <person name="Sodergren E."/>
            <person name="Song X.-Z."/>
            <person name="Steffen D."/>
            <person name="Lovering R.C."/>
            <person name="Wheeler D.A."/>
            <person name="Worley K.C."/>
            <person name="Yuan Y."/>
            <person name="Zhang Z."/>
            <person name="Adams C.Q."/>
            <person name="Ansari-Lari M.A."/>
            <person name="Ayele M."/>
            <person name="Brown M.J."/>
            <person name="Chen G."/>
            <person name="Chen Z."/>
            <person name="Clerc-Blankenburg K.P."/>
            <person name="Davis C."/>
            <person name="Delgado O."/>
            <person name="Dinh H.H."/>
            <person name="Draper H."/>
            <person name="Gonzalez-Garay M.L."/>
            <person name="Havlak P."/>
            <person name="Jackson L.R."/>
            <person name="Jacob L.S."/>
            <person name="Kelly S.H."/>
            <person name="Li L."/>
            <person name="Li Z."/>
            <person name="Liu J."/>
            <person name="Liu W."/>
            <person name="Lu J."/>
            <person name="Maheshwari M."/>
            <person name="Nguyen B.-V."/>
            <person name="Okwuonu G.O."/>
            <person name="Pasternak S."/>
            <person name="Perez L.M."/>
            <person name="Plopper F.J.H."/>
            <person name="Santibanez J."/>
            <person name="Shen H."/>
            <person name="Tabor P.E."/>
            <person name="Verduzco D."/>
            <person name="Waldron L."/>
            <person name="Wang Q."/>
            <person name="Williams G.A."/>
            <person name="Zhang J."/>
            <person name="Zhou J."/>
            <person name="Allen C.C."/>
            <person name="Amin A.G."/>
            <person name="Anyalebechi V."/>
            <person name="Bailey M."/>
            <person name="Barbaria J.A."/>
            <person name="Bimage K.E."/>
            <person name="Bryant N.P."/>
            <person name="Burch P.E."/>
            <person name="Burkett C.E."/>
            <person name="Burrell K.L."/>
            <person name="Calderon E."/>
            <person name="Cardenas V."/>
            <person name="Carter K."/>
            <person name="Casias K."/>
            <person name="Cavazos I."/>
            <person name="Cavazos S.R."/>
            <person name="Ceasar H."/>
            <person name="Chacko J."/>
            <person name="Chan S.N."/>
            <person name="Chavez D."/>
            <person name="Christopoulos C."/>
            <person name="Chu J."/>
            <person name="Cockrell R."/>
            <person name="Cox C.D."/>
            <person name="Dang M."/>
            <person name="Dathorne S.R."/>
            <person name="David R."/>
            <person name="Davis C.M."/>
            <person name="Davy-Carroll L."/>
            <person name="Deshazo D.R."/>
            <person name="Donlin J.E."/>
            <person name="D'Souza L."/>
            <person name="Eaves K.A."/>
            <person name="Egan A."/>
            <person name="Emery-Cohen A.J."/>
            <person name="Escotto M."/>
            <person name="Flagg N."/>
            <person name="Forbes L.D."/>
            <person name="Gabisi A.M."/>
            <person name="Garza M."/>
            <person name="Hamilton C."/>
            <person name="Henderson N."/>
            <person name="Hernandez O."/>
            <person name="Hines S."/>
            <person name="Hogues M.E."/>
            <person name="Huang M."/>
            <person name="Idlebird D.G."/>
            <person name="Johnson R."/>
            <person name="Jolivet A."/>
            <person name="Jones S."/>
            <person name="Kagan R."/>
            <person name="King L.M."/>
            <person name="Leal B."/>
            <person name="Lebow H."/>
            <person name="Lee S."/>
            <person name="LeVan J.M."/>
            <person name="Lewis L.C."/>
            <person name="London P."/>
            <person name="Lorensuhewa L.M."/>
            <person name="Loulseged H."/>
            <person name="Lovett D.A."/>
            <person name="Lucier A."/>
            <person name="Lucier R.L."/>
            <person name="Ma J."/>
            <person name="Madu R.C."/>
            <person name="Mapua P."/>
            <person name="Martindale A.D."/>
            <person name="Martinez E."/>
            <person name="Massey E."/>
            <person name="Mawhiney S."/>
            <person name="Meador M.G."/>
            <person name="Mendez S."/>
            <person name="Mercado C."/>
            <person name="Mercado I.C."/>
            <person name="Merritt C.E."/>
            <person name="Miner Z.L."/>
            <person name="Minja E."/>
            <person name="Mitchell T."/>
            <person name="Mohabbat F."/>
            <person name="Mohabbat K."/>
            <person name="Montgomery B."/>
            <person name="Moore N."/>
            <person name="Morris S."/>
            <person name="Munidasa M."/>
            <person name="Ngo R.N."/>
            <person name="Nguyen N.B."/>
            <person name="Nickerson E."/>
            <person name="Nwaokelemeh O.O."/>
            <person name="Nwokenkwo S."/>
            <person name="Obregon M."/>
            <person name="Oguh M."/>
            <person name="Oragunye N."/>
            <person name="Oviedo R.J."/>
            <person name="Parish B.J."/>
            <person name="Parker D.N."/>
            <person name="Parrish J."/>
            <person name="Parks K.L."/>
            <person name="Paul H.A."/>
            <person name="Payton B.A."/>
            <person name="Perez A."/>
            <person name="Perrin W."/>
            <person name="Pickens A."/>
            <person name="Primus E.L."/>
            <person name="Pu L.-L."/>
            <person name="Puazo M."/>
            <person name="Quiles M.M."/>
            <person name="Quiroz J.B."/>
            <person name="Rabata D."/>
            <person name="Reeves K."/>
            <person name="Ruiz S.J."/>
            <person name="Shao H."/>
            <person name="Sisson I."/>
            <person name="Sonaike T."/>
            <person name="Sorelle R.P."/>
            <person name="Sutton A.E."/>
            <person name="Svatek A.F."/>
            <person name="Svetz L.A."/>
            <person name="Tamerisa K.S."/>
            <person name="Taylor T.R."/>
            <person name="Teague B."/>
            <person name="Thomas N."/>
            <person name="Thorn R.D."/>
            <person name="Trejos Z.Y."/>
            <person name="Trevino B.K."/>
            <person name="Ukegbu O.N."/>
            <person name="Urban J.B."/>
            <person name="Vasquez L.I."/>
            <person name="Vera V.A."/>
            <person name="Villasana D.M."/>
            <person name="Wang L."/>
            <person name="Ward-Moore S."/>
            <person name="Warren J.T."/>
            <person name="Wei X."/>
            <person name="White F."/>
            <person name="Williamson A.L."/>
            <person name="Wleczyk R."/>
            <person name="Wooden H.S."/>
            <person name="Wooden S.H."/>
            <person name="Yen J."/>
            <person name="Yoon L."/>
            <person name="Yoon V."/>
            <person name="Zorrilla S.E."/>
            <person name="Nelson D."/>
            <person name="Kucherlapati R."/>
            <person name="Weinstock G."/>
            <person name="Gibbs R.A."/>
        </authorList>
    </citation>
    <scope>NUCLEOTIDE SEQUENCE [LARGE SCALE GENOMIC DNA]</scope>
</reference>
<reference key="3">
    <citation type="journal article" date="2004" name="Nat. Genet.">
        <title>Complete sequencing and characterization of 21,243 full-length human cDNAs.</title>
        <authorList>
            <person name="Ota T."/>
            <person name="Suzuki Y."/>
            <person name="Nishikawa T."/>
            <person name="Otsuki T."/>
            <person name="Sugiyama T."/>
            <person name="Irie R."/>
            <person name="Wakamatsu A."/>
            <person name="Hayashi K."/>
            <person name="Sato H."/>
            <person name="Nagai K."/>
            <person name="Kimura K."/>
            <person name="Makita H."/>
            <person name="Sekine M."/>
            <person name="Obayashi M."/>
            <person name="Nishi T."/>
            <person name="Shibahara T."/>
            <person name="Tanaka T."/>
            <person name="Ishii S."/>
            <person name="Yamamoto J."/>
            <person name="Saito K."/>
            <person name="Kawai Y."/>
            <person name="Isono Y."/>
            <person name="Nakamura Y."/>
            <person name="Nagahari K."/>
            <person name="Murakami K."/>
            <person name="Yasuda T."/>
            <person name="Iwayanagi T."/>
            <person name="Wagatsuma M."/>
            <person name="Shiratori A."/>
            <person name="Sudo H."/>
            <person name="Hosoiri T."/>
            <person name="Kaku Y."/>
            <person name="Kodaira H."/>
            <person name="Kondo H."/>
            <person name="Sugawara M."/>
            <person name="Takahashi M."/>
            <person name="Kanda K."/>
            <person name="Yokoi T."/>
            <person name="Furuya T."/>
            <person name="Kikkawa E."/>
            <person name="Omura Y."/>
            <person name="Abe K."/>
            <person name="Kamihara K."/>
            <person name="Katsuta N."/>
            <person name="Sato K."/>
            <person name="Tanikawa M."/>
            <person name="Yamazaki M."/>
            <person name="Ninomiya K."/>
            <person name="Ishibashi T."/>
            <person name="Yamashita H."/>
            <person name="Murakawa K."/>
            <person name="Fujimori K."/>
            <person name="Tanai H."/>
            <person name="Kimata M."/>
            <person name="Watanabe M."/>
            <person name="Hiraoka S."/>
            <person name="Chiba Y."/>
            <person name="Ishida S."/>
            <person name="Ono Y."/>
            <person name="Takiguchi S."/>
            <person name="Watanabe S."/>
            <person name="Yosida M."/>
            <person name="Hotuta T."/>
            <person name="Kusano J."/>
            <person name="Kanehori K."/>
            <person name="Takahashi-Fujii A."/>
            <person name="Hara H."/>
            <person name="Tanase T.-O."/>
            <person name="Nomura Y."/>
            <person name="Togiya S."/>
            <person name="Komai F."/>
            <person name="Hara R."/>
            <person name="Takeuchi K."/>
            <person name="Arita M."/>
            <person name="Imose N."/>
            <person name="Musashino K."/>
            <person name="Yuuki H."/>
            <person name="Oshima A."/>
            <person name="Sasaki N."/>
            <person name="Aotsuka S."/>
            <person name="Yoshikawa Y."/>
            <person name="Matsunawa H."/>
            <person name="Ichihara T."/>
            <person name="Shiohata N."/>
            <person name="Sano S."/>
            <person name="Moriya S."/>
            <person name="Momiyama H."/>
            <person name="Satoh N."/>
            <person name="Takami S."/>
            <person name="Terashima Y."/>
            <person name="Suzuki O."/>
            <person name="Nakagawa S."/>
            <person name="Senoh A."/>
            <person name="Mizoguchi H."/>
            <person name="Goto Y."/>
            <person name="Shimizu F."/>
            <person name="Wakebe H."/>
            <person name="Hishigaki H."/>
            <person name="Watanabe T."/>
            <person name="Sugiyama A."/>
            <person name="Takemoto M."/>
            <person name="Kawakami B."/>
            <person name="Yamazaki M."/>
            <person name="Watanabe K."/>
            <person name="Kumagai A."/>
            <person name="Itakura S."/>
            <person name="Fukuzumi Y."/>
            <person name="Fujimori Y."/>
            <person name="Komiyama M."/>
            <person name="Tashiro H."/>
            <person name="Tanigami A."/>
            <person name="Fujiwara T."/>
            <person name="Ono T."/>
            <person name="Yamada K."/>
            <person name="Fujii Y."/>
            <person name="Ozaki K."/>
            <person name="Hirao M."/>
            <person name="Ohmori Y."/>
            <person name="Kawabata A."/>
            <person name="Hikiji T."/>
            <person name="Kobatake N."/>
            <person name="Inagaki H."/>
            <person name="Ikema Y."/>
            <person name="Okamoto S."/>
            <person name="Okitani R."/>
            <person name="Kawakami T."/>
            <person name="Noguchi S."/>
            <person name="Itoh T."/>
            <person name="Shigeta K."/>
            <person name="Senba T."/>
            <person name="Matsumura K."/>
            <person name="Nakajima Y."/>
            <person name="Mizuno T."/>
            <person name="Morinaga M."/>
            <person name="Sasaki M."/>
            <person name="Togashi T."/>
            <person name="Oyama M."/>
            <person name="Hata H."/>
            <person name="Watanabe M."/>
            <person name="Komatsu T."/>
            <person name="Mizushima-Sugano J."/>
            <person name="Satoh T."/>
            <person name="Shirai Y."/>
            <person name="Takahashi Y."/>
            <person name="Nakagawa K."/>
            <person name="Okumura K."/>
            <person name="Nagase T."/>
            <person name="Nomura N."/>
            <person name="Kikuchi H."/>
            <person name="Masuho Y."/>
            <person name="Yamashita R."/>
            <person name="Nakai K."/>
            <person name="Yada T."/>
            <person name="Nakamura Y."/>
            <person name="Ohara O."/>
            <person name="Isogai T."/>
            <person name="Sugano S."/>
        </authorList>
    </citation>
    <scope>NUCLEOTIDE SEQUENCE [LARGE SCALE MRNA] OF 44-563 (ISOFORM 2)</scope>
    <scope>VARIANT THR-193</scope>
    <source>
        <tissue>Cerebellum</tissue>
    </source>
</reference>
<reference key="4">
    <citation type="journal article" date="2004" name="Pflugers Arch.">
        <title>The SLC26 gene family of multifunctional anion exchangers.</title>
        <authorList>
            <person name="Mount D.B."/>
            <person name="Romero M.F."/>
        </authorList>
    </citation>
    <scope>IDENTIFICATION</scope>
</reference>
<reference key="5">
    <citation type="journal article" date="2006" name="Science">
        <title>The consensus coding sequences of human breast and colorectal cancers.</title>
        <authorList>
            <person name="Sjoeblom T."/>
            <person name="Jones S."/>
            <person name="Wood L.D."/>
            <person name="Parsons D.W."/>
            <person name="Lin J."/>
            <person name="Barber T.D."/>
            <person name="Mandelker D."/>
            <person name="Leary R.J."/>
            <person name="Ptak J."/>
            <person name="Silliman N."/>
            <person name="Szabo S."/>
            <person name="Buckhaults P."/>
            <person name="Farrell C."/>
            <person name="Meeh P."/>
            <person name="Markowitz S.D."/>
            <person name="Willis J."/>
            <person name="Dawson D."/>
            <person name="Willson J.K.V."/>
            <person name="Gazdar A.F."/>
            <person name="Hartigan J."/>
            <person name="Wu L."/>
            <person name="Liu C."/>
            <person name="Parmigiani G."/>
            <person name="Park B.H."/>
            <person name="Bachman K.E."/>
            <person name="Papadopoulos N."/>
            <person name="Vogelstein B."/>
            <person name="Kinzler K.W."/>
            <person name="Velculescu V.E."/>
        </authorList>
    </citation>
    <scope>VARIANT [LARGE SCALE ANALYSIS] SER-270</scope>
</reference>
<protein>
    <recommendedName>
        <fullName>Putative solute carrier family 26 member 10P</fullName>
    </recommendedName>
</protein>
<name>S2610_HUMAN</name>
<organism>
    <name type="scientific">Homo sapiens</name>
    <name type="common">Human</name>
    <dbReference type="NCBI Taxonomy" id="9606"/>
    <lineage>
        <taxon>Eukaryota</taxon>
        <taxon>Metazoa</taxon>
        <taxon>Chordata</taxon>
        <taxon>Craniata</taxon>
        <taxon>Vertebrata</taxon>
        <taxon>Euteleostomi</taxon>
        <taxon>Mammalia</taxon>
        <taxon>Eutheria</taxon>
        <taxon>Euarchontoglires</taxon>
        <taxon>Primates</taxon>
        <taxon>Haplorrhini</taxon>
        <taxon>Catarrhini</taxon>
        <taxon>Hominidae</taxon>
        <taxon>Homo</taxon>
    </lineage>
</organism>
<keyword id="KW-0025">Alternative splicing</keyword>
<keyword id="KW-0050">Antiport</keyword>
<keyword id="KW-0868">Chloride</keyword>
<keyword id="KW-0472">Membrane</keyword>
<keyword id="KW-1185">Reference proteome</keyword>
<keyword id="KW-0812">Transmembrane</keyword>
<keyword id="KW-1133">Transmembrane helix</keyword>
<keyword id="KW-0813">Transport</keyword>
<gene>
    <name type="primary">SLC26A10P</name>
    <name type="synonym">SLC26A10</name>
</gene>
<accession>Q8NG04</accession>
<accession>A6NMJ2</accession>
<accession>B6ZDQ3</accession>
<accession>Q6ZWI7</accession>
<sequence>MRLDLASLMSAPKSLGSAFKSWRLDKAPSPQHTFPSTSIPGMAFALLASVPPVFGLYTSFFPVLIYSLLGTGRHLSTGTFAILSLMTGSAVERLVPEPLVGNLSGIEKEQLDAQRVGVAAAVAFGSGALMLGMFVLQLGVLSTFLSEPVVKALTSGAALHVLLSQLPSLLGLSLPRQIGCFSLFKTLASLLTALPRSSPAELTISALSLALLVPVKELNVRFRDRLPTPIPGEVVLVLLASVLCFTSSVDTRYQVQIVGLLPGGFPQPLLPNLAELPRILADSLPIALVSFAVSASLASIHADKYSYTIDSNQEFLAHGASNLISSLFSCFPNSATLATTNLLVDAGGKTQLAGLFSCTVVLSVLLWLGPFFYYLPKAVLACINISSMRQVFCQMQELPQLWHISRVDFLLQVPGLCILSYPTPLYFGTRGQFRCNLEWHLGLGEGEKETSKPDGPMVAVAEPVRVVVLDFSGVTFADAAGAREVVQVRERLASRCRDARIRLLLAQCNALVQGTLTRVGLLDRVTPDQLFVSVQDAAAYALGSLLRGSSTRSGSQEALGCGK</sequence>
<comment type="function">
    <text evidence="1">Chloride/bicarbonate exchanger.</text>
</comment>
<comment type="subcellular location">
    <subcellularLocation>
        <location evidence="7">Membrane</location>
        <topology evidence="7">Multi-pass membrane protein</topology>
    </subcellularLocation>
</comment>
<comment type="alternative products">
    <event type="alternative splicing"/>
    <isoform>
        <id>Q8NG04-1</id>
        <name>1</name>
        <sequence type="displayed"/>
    </isoform>
    <isoform>
        <id>Q8NG04-2</id>
        <name>2</name>
        <sequence type="described" ref="VSP_034748 VSP_034749"/>
    </isoform>
</comment>
<comment type="similarity">
    <text evidence="7">Belongs to the SLC26A/SulP transporter (TC 2.A.53) family.</text>
</comment>
<comment type="caution">
    <text evidence="7">Could be the product of a pseudogene.</text>
</comment>
<comment type="sequence caution" evidence="7">
    <conflict type="erroneous initiation">
        <sequence resource="EMBL-CDS" id="BAC85515"/>
    </conflict>
</comment>
<dbReference type="EMBL" id="AF331523">
    <property type="protein sequence ID" value="AAM92901.1"/>
    <property type="molecule type" value="mRNA"/>
</dbReference>
<dbReference type="EMBL" id="AC025165">
    <property type="status" value="NOT_ANNOTATED_CDS"/>
    <property type="molecule type" value="Genomic_DNA"/>
</dbReference>
<dbReference type="EMBL" id="AK122981">
    <property type="protein sequence ID" value="BAC85515.1"/>
    <property type="status" value="ALT_INIT"/>
    <property type="molecule type" value="mRNA"/>
</dbReference>
<dbReference type="RefSeq" id="NP_597996.2">
    <property type="nucleotide sequence ID" value="NM_133489.2"/>
</dbReference>
<dbReference type="SMR" id="Q8NG04"/>
<dbReference type="BioGRID" id="122374">
    <property type="interactions" value="2"/>
</dbReference>
<dbReference type="FunCoup" id="Q8NG04">
    <property type="interactions" value="10"/>
</dbReference>
<dbReference type="IntAct" id="Q8NG04">
    <property type="interactions" value="1"/>
</dbReference>
<dbReference type="STRING" id="9606.ENSP00000320217"/>
<dbReference type="TCDB" id="2.A.53.2.13">
    <property type="family name" value="the sulfate permease (sulp) family"/>
</dbReference>
<dbReference type="iPTMnet" id="Q8NG04"/>
<dbReference type="PhosphoSitePlus" id="Q8NG04"/>
<dbReference type="BioMuta" id="SLC26A10"/>
<dbReference type="DMDM" id="74715621"/>
<dbReference type="jPOST" id="Q8NG04"/>
<dbReference type="PaxDb" id="9606-ENSP00000320217"/>
<dbReference type="ProteomicsDB" id="73403">
    <molecule id="Q8NG04-2"/>
</dbReference>
<dbReference type="DNASU" id="65012"/>
<dbReference type="UCSC" id="uc001spe.4">
    <molecule id="Q8NG04-1"/>
    <property type="organism name" value="human"/>
</dbReference>
<dbReference type="AGR" id="HGNC:14470"/>
<dbReference type="DisGeNET" id="65012"/>
<dbReference type="GeneCards" id="SLC26A10P"/>
<dbReference type="HGNC" id="HGNC:14470">
    <property type="gene designation" value="SLC26A10P"/>
</dbReference>
<dbReference type="neXtProt" id="NX_Q8NG04"/>
<dbReference type="PharmGKB" id="PA37887"/>
<dbReference type="eggNOG" id="KOG0236">
    <property type="taxonomic scope" value="Eukaryota"/>
</dbReference>
<dbReference type="HOGENOM" id="CLU_003182_9_4_1"/>
<dbReference type="InParanoid" id="Q8NG04"/>
<dbReference type="PAN-GO" id="Q8NG04">
    <property type="GO annotations" value="7 GO annotations based on evolutionary models"/>
</dbReference>
<dbReference type="PhylomeDB" id="Q8NG04"/>
<dbReference type="TreeFam" id="TF313784"/>
<dbReference type="PathwayCommons" id="Q8NG04"/>
<dbReference type="BioGRID-ORCS" id="65012">
    <property type="hits" value="17 hits in 1151 CRISPR screens"/>
</dbReference>
<dbReference type="ChiTaRS" id="SLC26A10">
    <property type="organism name" value="human"/>
</dbReference>
<dbReference type="GenomeRNAi" id="65012"/>
<dbReference type="Pharos" id="Q8NG04">
    <property type="development level" value="Tdark"/>
</dbReference>
<dbReference type="PRO" id="PR:Q8NG04"/>
<dbReference type="Proteomes" id="UP000005640">
    <property type="component" value="Chromosome 12"/>
</dbReference>
<dbReference type="RNAct" id="Q8NG04">
    <property type="molecule type" value="protein"/>
</dbReference>
<dbReference type="GO" id="GO:0005886">
    <property type="term" value="C:plasma membrane"/>
    <property type="evidence" value="ECO:0000318"/>
    <property type="project" value="GO_Central"/>
</dbReference>
<dbReference type="GO" id="GO:0015297">
    <property type="term" value="F:antiporter activity"/>
    <property type="evidence" value="ECO:0007669"/>
    <property type="project" value="UniProtKB-KW"/>
</dbReference>
<dbReference type="GO" id="GO:0015106">
    <property type="term" value="F:bicarbonate transmembrane transporter activity"/>
    <property type="evidence" value="ECO:0000318"/>
    <property type="project" value="GO_Central"/>
</dbReference>
<dbReference type="GO" id="GO:0015108">
    <property type="term" value="F:chloride transmembrane transporter activity"/>
    <property type="evidence" value="ECO:0000318"/>
    <property type="project" value="GO_Central"/>
</dbReference>
<dbReference type="GO" id="GO:0019531">
    <property type="term" value="F:oxalate transmembrane transporter activity"/>
    <property type="evidence" value="ECO:0000318"/>
    <property type="project" value="GO_Central"/>
</dbReference>
<dbReference type="GO" id="GO:0015116">
    <property type="term" value="F:sulfate transmembrane transporter activity"/>
    <property type="evidence" value="ECO:0000318"/>
    <property type="project" value="GO_Central"/>
</dbReference>
<dbReference type="GO" id="GO:1902476">
    <property type="term" value="P:chloride transmembrane transport"/>
    <property type="evidence" value="ECO:0000318"/>
    <property type="project" value="GO_Central"/>
</dbReference>
<dbReference type="GO" id="GO:1902358">
    <property type="term" value="P:sulfate transmembrane transport"/>
    <property type="evidence" value="ECO:0000318"/>
    <property type="project" value="GO_Central"/>
</dbReference>
<dbReference type="CDD" id="cd07042">
    <property type="entry name" value="STAS_SulP_like_sulfate_transporter"/>
    <property type="match status" value="1"/>
</dbReference>
<dbReference type="FunFam" id="3.30.750.24:FF:000027">
    <property type="entry name" value="Solute carrier family 26 member 10"/>
    <property type="match status" value="1"/>
</dbReference>
<dbReference type="Gene3D" id="3.30.750.24">
    <property type="entry name" value="STAS domain"/>
    <property type="match status" value="1"/>
</dbReference>
<dbReference type="InterPro" id="IPR011547">
    <property type="entry name" value="SLC26A/SulP_dom"/>
</dbReference>
<dbReference type="InterPro" id="IPR001902">
    <property type="entry name" value="SLC26A/SulP_fam"/>
</dbReference>
<dbReference type="InterPro" id="IPR002645">
    <property type="entry name" value="STAS_dom"/>
</dbReference>
<dbReference type="InterPro" id="IPR036513">
    <property type="entry name" value="STAS_dom_sf"/>
</dbReference>
<dbReference type="PANTHER" id="PTHR11814">
    <property type="entry name" value="SULFATE TRANSPORTER"/>
    <property type="match status" value="1"/>
</dbReference>
<dbReference type="Pfam" id="PF01740">
    <property type="entry name" value="STAS"/>
    <property type="match status" value="1"/>
</dbReference>
<dbReference type="Pfam" id="PF00916">
    <property type="entry name" value="Sulfate_transp"/>
    <property type="match status" value="1"/>
</dbReference>
<dbReference type="SUPFAM" id="SSF52091">
    <property type="entry name" value="SpoIIaa-like"/>
    <property type="match status" value="1"/>
</dbReference>
<dbReference type="PROSITE" id="PS50801">
    <property type="entry name" value="STAS"/>
    <property type="match status" value="1"/>
</dbReference>